<reference key="1">
    <citation type="journal article" date="2004" name="Nat. Genet.">
        <title>Evidence in the Legionella pneumophila genome for exploitation of host cell functions and high genome plasticity.</title>
        <authorList>
            <person name="Cazalet C."/>
            <person name="Rusniok C."/>
            <person name="Brueggemann H."/>
            <person name="Zidane N."/>
            <person name="Magnier A."/>
            <person name="Ma L."/>
            <person name="Tichit M."/>
            <person name="Jarraud S."/>
            <person name="Bouchier C."/>
            <person name="Vandenesch F."/>
            <person name="Kunst F."/>
            <person name="Etienne J."/>
            <person name="Glaser P."/>
            <person name="Buchrieser C."/>
        </authorList>
    </citation>
    <scope>NUCLEOTIDE SEQUENCE [LARGE SCALE GENOMIC DNA]</scope>
    <source>
        <strain>Paris</strain>
    </source>
</reference>
<proteinExistence type="inferred from homology"/>
<name>RLME_LEGPA</name>
<organism>
    <name type="scientific">Legionella pneumophila (strain Paris)</name>
    <dbReference type="NCBI Taxonomy" id="297246"/>
    <lineage>
        <taxon>Bacteria</taxon>
        <taxon>Pseudomonadati</taxon>
        <taxon>Pseudomonadota</taxon>
        <taxon>Gammaproteobacteria</taxon>
        <taxon>Legionellales</taxon>
        <taxon>Legionellaceae</taxon>
        <taxon>Legionella</taxon>
    </lineage>
</organism>
<gene>
    <name evidence="1" type="primary">rlmE</name>
    <name evidence="1" type="synonym">ftsJ</name>
    <name evidence="1" type="synonym">rrmJ</name>
    <name type="ordered locus">lpp2843</name>
</gene>
<feature type="chain" id="PRO_0000155507" description="Ribosomal RNA large subunit methyltransferase E">
    <location>
        <begin position="1"/>
        <end position="206"/>
    </location>
</feature>
<feature type="active site" description="Proton acceptor" evidence="1">
    <location>
        <position position="161"/>
    </location>
</feature>
<feature type="binding site" evidence="1">
    <location>
        <position position="60"/>
    </location>
    <ligand>
        <name>S-adenosyl-L-methionine</name>
        <dbReference type="ChEBI" id="CHEBI:59789"/>
    </ligand>
</feature>
<feature type="binding site" evidence="1">
    <location>
        <position position="62"/>
    </location>
    <ligand>
        <name>S-adenosyl-L-methionine</name>
        <dbReference type="ChEBI" id="CHEBI:59789"/>
    </ligand>
</feature>
<feature type="binding site" evidence="1">
    <location>
        <position position="80"/>
    </location>
    <ligand>
        <name>S-adenosyl-L-methionine</name>
        <dbReference type="ChEBI" id="CHEBI:59789"/>
    </ligand>
</feature>
<feature type="binding site" evidence="1">
    <location>
        <position position="96"/>
    </location>
    <ligand>
        <name>S-adenosyl-L-methionine</name>
        <dbReference type="ChEBI" id="CHEBI:59789"/>
    </ligand>
</feature>
<feature type="binding site" evidence="1">
    <location>
        <position position="121"/>
    </location>
    <ligand>
        <name>S-adenosyl-L-methionine</name>
        <dbReference type="ChEBI" id="CHEBI:59789"/>
    </ligand>
</feature>
<dbReference type="EC" id="2.1.1.166" evidence="1"/>
<dbReference type="EMBL" id="CR628336">
    <property type="protein sequence ID" value="CAH13996.1"/>
    <property type="molecule type" value="Genomic_DNA"/>
</dbReference>
<dbReference type="RefSeq" id="WP_015443939.1">
    <property type="nucleotide sequence ID" value="NC_006368.1"/>
</dbReference>
<dbReference type="SMR" id="Q5X1A0"/>
<dbReference type="GeneID" id="57036795"/>
<dbReference type="KEGG" id="lpp:lpp2843"/>
<dbReference type="LegioList" id="lpp2843"/>
<dbReference type="HOGENOM" id="CLU_009422_4_0_6"/>
<dbReference type="GO" id="GO:0005737">
    <property type="term" value="C:cytoplasm"/>
    <property type="evidence" value="ECO:0007669"/>
    <property type="project" value="UniProtKB-SubCell"/>
</dbReference>
<dbReference type="GO" id="GO:0008650">
    <property type="term" value="F:rRNA (uridine-2'-O-)-methyltransferase activity"/>
    <property type="evidence" value="ECO:0007669"/>
    <property type="project" value="UniProtKB-UniRule"/>
</dbReference>
<dbReference type="FunFam" id="3.40.50.150:FF:000005">
    <property type="entry name" value="Ribosomal RNA large subunit methyltransferase E"/>
    <property type="match status" value="1"/>
</dbReference>
<dbReference type="Gene3D" id="3.40.50.150">
    <property type="entry name" value="Vaccinia Virus protein VP39"/>
    <property type="match status" value="1"/>
</dbReference>
<dbReference type="HAMAP" id="MF_01547">
    <property type="entry name" value="RNA_methyltr_E"/>
    <property type="match status" value="1"/>
</dbReference>
<dbReference type="InterPro" id="IPR050082">
    <property type="entry name" value="RNA_methyltr_RlmE"/>
</dbReference>
<dbReference type="InterPro" id="IPR002877">
    <property type="entry name" value="RNA_MeTrfase_FtsJ_dom"/>
</dbReference>
<dbReference type="InterPro" id="IPR015507">
    <property type="entry name" value="rRNA-MeTfrase_E"/>
</dbReference>
<dbReference type="InterPro" id="IPR029063">
    <property type="entry name" value="SAM-dependent_MTases_sf"/>
</dbReference>
<dbReference type="NCBIfam" id="NF008390">
    <property type="entry name" value="PRK11188.1"/>
    <property type="match status" value="1"/>
</dbReference>
<dbReference type="PANTHER" id="PTHR10920">
    <property type="entry name" value="RIBOSOMAL RNA METHYLTRANSFERASE"/>
    <property type="match status" value="1"/>
</dbReference>
<dbReference type="PANTHER" id="PTHR10920:SF18">
    <property type="entry name" value="RRNA METHYLTRANSFERASE 2, MITOCHONDRIAL"/>
    <property type="match status" value="1"/>
</dbReference>
<dbReference type="Pfam" id="PF01728">
    <property type="entry name" value="FtsJ"/>
    <property type="match status" value="1"/>
</dbReference>
<dbReference type="PIRSF" id="PIRSF005461">
    <property type="entry name" value="23S_rRNA_mtase"/>
    <property type="match status" value="1"/>
</dbReference>
<dbReference type="SUPFAM" id="SSF53335">
    <property type="entry name" value="S-adenosyl-L-methionine-dependent methyltransferases"/>
    <property type="match status" value="1"/>
</dbReference>
<sequence length="206" mass="23148">MNRTKSSKRWLQEHFDDVYVKKAQAEGYRSRAVYKLKEIDDKESLIKPGMTVVDLGAAPGGWTQYASEKMRGSGRLVALDILPMDALPNVEFILGDFREDNVLQELINLIPQRTLDLLLSDMAPNMSGSSAIDIPRAMYLVELAFDFAEKMLKPGGNMLVKIFHGSGFDELVKQARASFEKVVIRKPSASRSRSKETYLLAKGYNL</sequence>
<protein>
    <recommendedName>
        <fullName evidence="1">Ribosomal RNA large subunit methyltransferase E</fullName>
        <ecNumber evidence="1">2.1.1.166</ecNumber>
    </recommendedName>
    <alternativeName>
        <fullName evidence="1">23S rRNA Um2552 methyltransferase</fullName>
    </alternativeName>
    <alternativeName>
        <fullName evidence="1">rRNA (uridine-2'-O-)-methyltransferase</fullName>
    </alternativeName>
</protein>
<accession>Q5X1A0</accession>
<evidence type="ECO:0000255" key="1">
    <source>
        <dbReference type="HAMAP-Rule" id="MF_01547"/>
    </source>
</evidence>
<comment type="function">
    <text evidence="1">Specifically methylates the uridine in position 2552 of 23S rRNA at the 2'-O position of the ribose in the fully assembled 50S ribosomal subunit.</text>
</comment>
<comment type="catalytic activity">
    <reaction evidence="1">
        <text>uridine(2552) in 23S rRNA + S-adenosyl-L-methionine = 2'-O-methyluridine(2552) in 23S rRNA + S-adenosyl-L-homocysteine + H(+)</text>
        <dbReference type="Rhea" id="RHEA:42720"/>
        <dbReference type="Rhea" id="RHEA-COMP:10202"/>
        <dbReference type="Rhea" id="RHEA-COMP:10203"/>
        <dbReference type="ChEBI" id="CHEBI:15378"/>
        <dbReference type="ChEBI" id="CHEBI:57856"/>
        <dbReference type="ChEBI" id="CHEBI:59789"/>
        <dbReference type="ChEBI" id="CHEBI:65315"/>
        <dbReference type="ChEBI" id="CHEBI:74478"/>
        <dbReference type="EC" id="2.1.1.166"/>
    </reaction>
</comment>
<comment type="subcellular location">
    <subcellularLocation>
        <location evidence="1">Cytoplasm</location>
    </subcellularLocation>
</comment>
<comment type="similarity">
    <text evidence="1">Belongs to the class I-like SAM-binding methyltransferase superfamily. RNA methyltransferase RlmE family.</text>
</comment>
<keyword id="KW-0963">Cytoplasm</keyword>
<keyword id="KW-0489">Methyltransferase</keyword>
<keyword id="KW-0698">rRNA processing</keyword>
<keyword id="KW-0949">S-adenosyl-L-methionine</keyword>
<keyword id="KW-0808">Transferase</keyword>